<feature type="chain" id="PRO_0000204178" description="Regulator of G-protein signaling 2">
    <location>
        <begin position="1"/>
        <end position="211"/>
    </location>
</feature>
<feature type="domain" description="RGS" evidence="2">
    <location>
        <begin position="83"/>
        <end position="199"/>
    </location>
</feature>
<feature type="region of interest" description="Disordered" evidence="3">
    <location>
        <begin position="14"/>
        <end position="33"/>
    </location>
</feature>
<feature type="region of interest" description="Necessary for membrane association" evidence="5">
    <location>
        <begin position="32"/>
        <end position="66"/>
    </location>
</feature>
<feature type="region of interest" description="Disordered" evidence="3">
    <location>
        <begin position="49"/>
        <end position="68"/>
    </location>
</feature>
<feature type="region of interest" description="Necessary to inhibit protein synthesis" evidence="11">
    <location>
        <begin position="79"/>
        <end position="116"/>
    </location>
</feature>
<feature type="splice variant" id="VSP_041298" description="In isoform 4." evidence="15">
    <location>
        <begin position="1"/>
        <end position="32"/>
    </location>
</feature>
<feature type="splice variant" id="VSP_041297" description="In isoform 3." evidence="15">
    <location>
        <begin position="1"/>
        <end position="15"/>
    </location>
</feature>
<feature type="splice variant" id="VSP_041296" description="In isoform 2." evidence="15">
    <location>
        <begin position="1"/>
        <end position="4"/>
    </location>
</feature>
<feature type="sequence variant" id="VAR_079238" description="Found in hypertensive patients; uncertain significance; decreased down-regulation of angiotensin-activated signaling pathway; decreased RGS2 protein abundance; dbSNP:rs141030117." evidence="7 12 13">
    <original>Q</original>
    <variation>L</variation>
    <location>
        <position position="2"/>
    </location>
</feature>
<feature type="sequence variant" id="VAR_079239" description="Found in hypertensive patients; likely benign; no effect on down-regulation of angiotensin-activated signaling pathway; dbSNP:rs141030117." evidence="7 12 13">
    <original>Q</original>
    <variation>R</variation>
    <location>
        <position position="2"/>
    </location>
</feature>
<feature type="sequence variant" id="VAR_079240" description="No effect on down-regulation of angiotensin-activated signaling pathway; dbSNP:rs145125159." evidence="12 13">
    <original>S</original>
    <variation>G</variation>
    <location>
        <position position="3"/>
    </location>
</feature>
<feature type="sequence variant" id="VAR_079241" description="No effect on down-regulation of angiotensin-activated signaling pathway; dbSNP:rs142499684." evidence="12 13">
    <original>A</original>
    <variation>V</variation>
    <location>
        <position position="4"/>
    </location>
</feature>
<feature type="sequence variant" id="VAR_079242" description="Found in hypertensive patients; likely benign; no effect on down-regulation of angiotensin-activated signaling pathway; dbSNP:rs193051407." evidence="7 12 13">
    <original>M</original>
    <variation>V</variation>
    <location>
        <position position="5"/>
    </location>
</feature>
<feature type="sequence variant" id="VAR_079243" description="No effect on down-regulation of angiotensin-activated signaling pathway; dbSNP:rs74466425." evidence="12 13">
    <original>K</original>
    <variation>N</variation>
    <location>
        <position position="18"/>
    </location>
</feature>
<feature type="sequence variant" id="VAR_079244" description="No effect on down-regulation of angiotensin-activated signaling pathway; dbSNP:rs148489044." evidence="12 13">
    <original>G</original>
    <variation>D</variation>
    <location>
        <position position="23"/>
    </location>
</feature>
<feature type="sequence variant" id="VAR_079245" description="Decreased down-regulation of angiotensin-activated signaling pathway; reduced localization at the cell membrane; dbSNP:rs201233692." evidence="12 13">
    <original>D</original>
    <variation>Y</variation>
    <location>
        <position position="40"/>
    </location>
</feature>
<feature type="sequence variant" id="VAR_079246" description="Found in hypertensive patients; uncertain significance; decreased down-regulation of angiotensin-activated signaling pathway; reduced localization at the cell membrane; dbSNP:rs200339834." evidence="7 12 13">
    <original>R</original>
    <variation>H</variation>
    <location>
        <position position="44"/>
    </location>
</feature>
<feature type="sequence variant" id="VAR_079247" description="No effect on down-regulation of angiotensin-activated signaling pathway; dbSNP:rs80221024." evidence="12 13">
    <original>Q</original>
    <variation>K</variation>
    <location>
        <position position="50"/>
    </location>
</feature>
<feature type="sequence variant" id="VAR_079248" description="No effect on down-regulation of angiotensin-activated signaling pathway; dbSNP:rs140811638." evidence="12 13">
    <original>P</original>
    <variation>L</variation>
    <location>
        <position position="55"/>
    </location>
</feature>
<feature type="sequence variant" id="VAR_079249" description="Found in hypertensive patients; likely benign; no effect on down-regulation of angiotensin-activated signaling pathway; dbSNP:rs1665572116." evidence="7 13">
    <original>Q</original>
    <variation>H</variation>
    <location>
        <position position="78"/>
    </location>
</feature>
<feature type="sequence variant" id="VAR_079250" description="No effect on down-regulation of angiotensin-activated signaling pathway; dbSNP:rs139237239." evidence="12 13">
    <original>A</original>
    <variation>G</variation>
    <location>
        <position position="99"/>
    </location>
</feature>
<feature type="sequence variant" id="VAR_079251" description="No effect on down-regulation of angiotensin-activated signaling pathway; dbSNP:rs146862218." evidence="12 13">
    <original>I</original>
    <variation>V</variation>
    <location>
        <position position="110"/>
    </location>
</feature>
<feature type="sequence variant" id="VAR_079252" description="Decreased down-regulation of angiotensin-activated signaling pathway; reduced interaction with GNAQ; dbSNP:rs369752935." evidence="12 13">
    <original>R</original>
    <variation>H</variation>
    <location>
        <position position="188"/>
    </location>
</feature>
<feature type="sequence variant" id="VAR_079253" description="No effect on down-regulation of angiotensin-activated signaling pathway; dbSNP:rs112707798." evidence="12 13">
    <original>Q</original>
    <variation>R</variation>
    <location>
        <position position="196"/>
    </location>
</feature>
<feature type="mutagenesis site" description="Loss of isoform 1 expression." evidence="8">
    <original>M</original>
    <variation>L</variation>
    <location>
        <position position="1"/>
    </location>
</feature>
<feature type="mutagenesis site" description="Loss of isoform 2 expression." evidence="8">
    <original>M</original>
    <variation>L</variation>
    <location>
        <position position="5"/>
    </location>
</feature>
<feature type="mutagenesis site" description="Loss of isoform 3 expression." evidence="8">
    <original>M</original>
    <variation>L</variation>
    <location>
        <position position="16"/>
    </location>
</feature>
<feature type="mutagenesis site" description="Loss of isoform 4 expression." evidence="8">
    <original>M</original>
    <variation>L</variation>
    <location>
        <position position="33"/>
    </location>
</feature>
<feature type="mutagenesis site" description="Impairs association with plasma membrane." evidence="5">
    <original>L</original>
    <variation>D</variation>
    <location>
        <position position="37"/>
    </location>
</feature>
<feature type="mutagenesis site" description="Impairs association with plasma membrane." evidence="5">
    <original>L</original>
    <variation>D</variation>
    <location>
        <position position="38"/>
    </location>
</feature>
<feature type="mutagenesis site" description="Impairs association with plasma membrane." evidence="5">
    <original>W</original>
    <variation>D</variation>
    <location>
        <position position="41"/>
    </location>
</feature>
<feature type="mutagenesis site" description="Impairs association with plasma membrane." evidence="5">
    <original>L</original>
    <variation>D</variation>
    <location>
        <position position="45"/>
    </location>
</feature>
<feature type="mutagenesis site" description="Impairs association with plasma membrane." evidence="5">
    <original>F</original>
    <variation>D</variation>
    <location>
        <position position="48"/>
    </location>
</feature>
<feature type="mutagenesis site" description="Impairs association with plasma membrane." evidence="5">
    <original>L</original>
    <variation>D</variation>
    <location>
        <position position="49"/>
    </location>
</feature>
<feature type="mutagenesis site" description="Near loss of EIF2B5 binding and inhibition of in vitro translation; when associated with E-86; L-87; S-90; K-102; F-105; I-110; E-111 and L-114." evidence="11">
    <original>L</original>
    <variation>A</variation>
    <location>
        <position position="79"/>
    </location>
</feature>
<feature type="mutagenesis site" description="Near loss of EIF2B5 binding and inhibition of in vitro translation; when associated with L-79; L-87; S-90; K-102; F-105; I-110; E-111 and L-114." evidence="11">
    <original>E</original>
    <variation>A</variation>
    <location>
        <position position="86"/>
    </location>
</feature>
<feature type="mutagenesis site" description="Near loss of EIF2B5 binding and inhibition of in vitro translation; when associated with L-79; E-86; S-90; K-102; F-105; I-110; E-111 and L-114." evidence="11">
    <original>L</original>
    <variation>A</variation>
    <location>
        <position position="87"/>
    </location>
</feature>
<feature type="mutagenesis site" description="Near loss of EIF2B5 binding and inhibition of in vitro translation; when associated with L-79; E-86; L-87; K-102; F-105; I-110; E-111 and L-114." evidence="11">
    <original>S</original>
    <variation>A</variation>
    <location>
        <position position="90"/>
    </location>
</feature>
<feature type="mutagenesis site" description="Near loss of EIF2B5 binding and inhibition of in vitro translation; when associated with L-79; E-86; L-87; S-90; F-105; I-110; E-111 and L-114." evidence="11">
    <original>K</original>
    <variation>A</variation>
    <location>
        <position position="102"/>
    </location>
</feature>
<feature type="mutagenesis site" description="Near loss of EIF2B5 binding and inhibition of in vitro translation; when associated with L-79; E-86; L-87; S-90; K-102; I-110; E-111 and L-114." evidence="11">
    <original>F</original>
    <variation>A</variation>
    <location>
        <position position="105"/>
    </location>
</feature>
<feature type="mutagenesis site" description="Changes specificity and confers GNAI1 binding; when associated with D-184. Strongly increases affinity for GNAI1 and GNAI3; when associated with D-184 and K-191." evidence="9 10">
    <original>C</original>
    <variation>S</variation>
    <location>
        <position position="106"/>
    </location>
</feature>
<feature type="mutagenesis site" description="Near loss of EIF2B5 binding and inhibition of in vitro translation; when associated with L-79; E-86; L-87; S-90; K-102; F-105; E-111 and L-114." evidence="11">
    <original>I</original>
    <variation>A</variation>
    <location>
        <position position="110"/>
    </location>
</feature>
<feature type="mutagenesis site" description="Near loss of EIF2B5 binding and inhibition of in vitro translation; when associated with L-79; E-86; L-87; S-90; K-102; F-105; I-110 and L-114." evidence="11">
    <original>E</original>
    <variation>A</variation>
    <location>
        <position position="111"/>
    </location>
</feature>
<feature type="mutagenesis site" description="Near loss of EIF2B5 binding and inhibition of in vitro translation; when associated with L-79; E-86; L-87; S-90; K-102; F-105; I-110 and E-111." evidence="11">
    <original>L</original>
    <variation>A</variation>
    <location>
        <position position="114"/>
    </location>
</feature>
<feature type="mutagenesis site" description="Decreases GTPase accelerating function but has no effect on translation inhibitory activity, suggesting that its role in translation is independent of its effects on G proteins." evidence="11">
    <original>N</original>
    <variation>A</variation>
    <location>
        <position position="149"/>
    </location>
</feature>
<feature type="mutagenesis site" description="Changes specificity and confers GNAI1 binding; when associated with D-184. Strongly increases affinity for GNAI1 and GNAI3; when associated with S-106 and K-191." evidence="9 10">
    <original>N</original>
    <variation>D</variation>
    <location>
        <position position="184"/>
    </location>
</feature>
<feature type="mutagenesis site" description="Strongly increases affinity for GNAI1 and GNAI3; when associated with S-106 and D-184." evidence="10">
    <original>E</original>
    <variation>K</variation>
    <location>
        <position position="191"/>
    </location>
</feature>
<feature type="helix" evidence="18">
    <location>
        <begin position="74"/>
        <end position="79"/>
    </location>
</feature>
<feature type="turn" evidence="19">
    <location>
        <begin position="80"/>
        <end position="82"/>
    </location>
</feature>
<feature type="helix" evidence="18">
    <location>
        <begin position="84"/>
        <end position="89"/>
    </location>
</feature>
<feature type="helix" evidence="18">
    <location>
        <begin position="91"/>
        <end position="103"/>
    </location>
</feature>
<feature type="helix" evidence="18">
    <location>
        <begin position="108"/>
        <end position="120"/>
    </location>
</feature>
<feature type="helix" evidence="18">
    <location>
        <begin position="125"/>
        <end position="139"/>
    </location>
</feature>
<feature type="helix" evidence="18">
    <location>
        <begin position="152"/>
        <end position="161"/>
    </location>
</feature>
<feature type="helix" evidence="18">
    <location>
        <begin position="162"/>
        <end position="164"/>
    </location>
</feature>
<feature type="turn" evidence="18">
    <location>
        <begin position="167"/>
        <end position="170"/>
    </location>
</feature>
<feature type="helix" evidence="18">
    <location>
        <begin position="171"/>
        <end position="183"/>
    </location>
</feature>
<feature type="helix" evidence="18">
    <location>
        <begin position="185"/>
        <end position="191"/>
    </location>
</feature>
<feature type="helix" evidence="18">
    <location>
        <begin position="193"/>
        <end position="199"/>
    </location>
</feature>
<name>RGS2_HUMAN</name>
<keyword id="KW-0002">3D-structure</keyword>
<keyword id="KW-0024">Alternative initiation</keyword>
<keyword id="KW-0131">Cell cycle</keyword>
<keyword id="KW-1003">Cell membrane</keyword>
<keyword id="KW-0963">Cytoplasm</keyword>
<keyword id="KW-0343">GTPase activation</keyword>
<keyword id="KW-0472">Membrane</keyword>
<keyword id="KW-0496">Mitochondrion</keyword>
<keyword id="KW-0539">Nucleus</keyword>
<keyword id="KW-0597">Phosphoprotein</keyword>
<keyword id="KW-1267">Proteomics identification</keyword>
<keyword id="KW-1185">Reference proteome</keyword>
<keyword id="KW-0734">Signal transduction inhibitor</keyword>
<keyword id="KW-0810">Translation regulation</keyword>
<gene>
    <name type="primary">RGS2</name>
    <name type="synonym">G0S8</name>
    <name type="ORF">GIG31</name>
</gene>
<dbReference type="EMBL" id="L13391">
    <property type="protein sequence ID" value="AAA20680.1"/>
    <property type="molecule type" value="Genomic_DNA"/>
</dbReference>
<dbReference type="EMBL" id="L13463">
    <property type="protein sequence ID" value="AAC37587.1"/>
    <property type="molecule type" value="mRNA"/>
</dbReference>
<dbReference type="EMBL" id="AF493926">
    <property type="protein sequence ID" value="AAM12640.1"/>
    <property type="molecule type" value="mRNA"/>
</dbReference>
<dbReference type="EMBL" id="AY971351">
    <property type="protein sequence ID" value="AAY40361.1"/>
    <property type="molecule type" value="mRNA"/>
</dbReference>
<dbReference type="EMBL" id="AK313668">
    <property type="protein sequence ID" value="BAG36420.1"/>
    <property type="molecule type" value="mRNA"/>
</dbReference>
<dbReference type="EMBL" id="BT007065">
    <property type="protein sequence ID" value="AAP35728.1"/>
    <property type="molecule type" value="mRNA"/>
</dbReference>
<dbReference type="EMBL" id="CR457410">
    <property type="protein sequence ID" value="CAG33691.1"/>
    <property type="molecule type" value="mRNA"/>
</dbReference>
<dbReference type="EMBL" id="AL035407">
    <property type="status" value="NOT_ANNOTATED_CDS"/>
    <property type="molecule type" value="Genomic_DNA"/>
</dbReference>
<dbReference type="EMBL" id="CH471067">
    <property type="protein sequence ID" value="EAW91231.1"/>
    <property type="molecule type" value="Genomic_DNA"/>
</dbReference>
<dbReference type="EMBL" id="BC007049">
    <property type="protein sequence ID" value="AAH07049.1"/>
    <property type="molecule type" value="mRNA"/>
</dbReference>
<dbReference type="CCDS" id="CCDS1377.1">
    <molecule id="P41220-1"/>
</dbReference>
<dbReference type="PIR" id="I53020">
    <property type="entry name" value="I53020"/>
</dbReference>
<dbReference type="RefSeq" id="NP_002914.1">
    <molecule id="P41220-1"/>
    <property type="nucleotide sequence ID" value="NM_002923.4"/>
</dbReference>
<dbReference type="PDB" id="2AF0">
    <property type="method" value="X-ray"/>
    <property type="resolution" value="2.30 A"/>
    <property type="chains" value="A=71-203"/>
</dbReference>
<dbReference type="PDB" id="2V4Z">
    <property type="method" value="X-ray"/>
    <property type="resolution" value="2.80 A"/>
    <property type="chains" value="B=71-209"/>
</dbReference>
<dbReference type="PDB" id="4EKC">
    <property type="method" value="X-ray"/>
    <property type="resolution" value="7.40 A"/>
    <property type="chains" value="B/D=72-203"/>
</dbReference>
<dbReference type="PDB" id="4EKD">
    <property type="method" value="X-ray"/>
    <property type="resolution" value="2.71 A"/>
    <property type="chains" value="B=72-203"/>
</dbReference>
<dbReference type="PDBsum" id="2AF0"/>
<dbReference type="PDBsum" id="2V4Z"/>
<dbReference type="PDBsum" id="4EKC"/>
<dbReference type="PDBsum" id="4EKD"/>
<dbReference type="SMR" id="P41220"/>
<dbReference type="BioGRID" id="111929">
    <property type="interactions" value="78"/>
</dbReference>
<dbReference type="CORUM" id="P41220"/>
<dbReference type="DIP" id="DIP-44289N"/>
<dbReference type="FunCoup" id="P41220">
    <property type="interactions" value="1548"/>
</dbReference>
<dbReference type="IntAct" id="P41220">
    <property type="interactions" value="65"/>
</dbReference>
<dbReference type="MINT" id="P41220"/>
<dbReference type="STRING" id="9606.ENSP00000235382"/>
<dbReference type="BindingDB" id="P41220"/>
<dbReference type="GlyGen" id="P41220">
    <property type="glycosylation" value="1 site"/>
</dbReference>
<dbReference type="iPTMnet" id="P41220"/>
<dbReference type="PhosphoSitePlus" id="P41220"/>
<dbReference type="SwissPalm" id="P41220"/>
<dbReference type="BioMuta" id="RGS2"/>
<dbReference type="DMDM" id="729545"/>
<dbReference type="MassIVE" id="P41220"/>
<dbReference type="PaxDb" id="9606-ENSP00000235382"/>
<dbReference type="PeptideAtlas" id="P41220"/>
<dbReference type="ProteomicsDB" id="55425">
    <molecule id="P41220-1"/>
</dbReference>
<dbReference type="ProteomicsDB" id="55426">
    <molecule id="P41220-2"/>
</dbReference>
<dbReference type="ProteomicsDB" id="55427">
    <molecule id="P41220-3"/>
</dbReference>
<dbReference type="ProteomicsDB" id="55428">
    <molecule id="P41220-4"/>
</dbReference>
<dbReference type="Antibodypedia" id="34461">
    <property type="antibodies" value="281 antibodies from 29 providers"/>
</dbReference>
<dbReference type="DNASU" id="5997"/>
<dbReference type="Ensembl" id="ENST00000235382.7">
    <molecule id="P41220-1"/>
    <property type="protein sequence ID" value="ENSP00000235382.5"/>
    <property type="gene ID" value="ENSG00000116741.8"/>
</dbReference>
<dbReference type="GeneID" id="5997"/>
<dbReference type="KEGG" id="hsa:5997"/>
<dbReference type="MANE-Select" id="ENST00000235382.7">
    <property type="protein sequence ID" value="ENSP00000235382.5"/>
    <property type="RefSeq nucleotide sequence ID" value="NM_002923.4"/>
    <property type="RefSeq protein sequence ID" value="NP_002914.1"/>
</dbReference>
<dbReference type="UCSC" id="uc001gsl.4">
    <molecule id="P41220-1"/>
    <property type="organism name" value="human"/>
</dbReference>
<dbReference type="AGR" id="HGNC:9998"/>
<dbReference type="CTD" id="5997"/>
<dbReference type="DisGeNET" id="5997"/>
<dbReference type="GeneCards" id="RGS2"/>
<dbReference type="HGNC" id="HGNC:9998">
    <property type="gene designation" value="RGS2"/>
</dbReference>
<dbReference type="HPA" id="ENSG00000116741">
    <property type="expression patterns" value="Low tissue specificity"/>
</dbReference>
<dbReference type="MIM" id="600861">
    <property type="type" value="gene"/>
</dbReference>
<dbReference type="neXtProt" id="NX_P41220"/>
<dbReference type="OpenTargets" id="ENSG00000116741"/>
<dbReference type="PharmGKB" id="PA34372"/>
<dbReference type="VEuPathDB" id="HostDB:ENSG00000116741"/>
<dbReference type="eggNOG" id="KOG3589">
    <property type="taxonomic scope" value="Eukaryota"/>
</dbReference>
<dbReference type="GeneTree" id="ENSGT00940000157937"/>
<dbReference type="HOGENOM" id="CLU_059863_3_2_1"/>
<dbReference type="InParanoid" id="P41220"/>
<dbReference type="OMA" id="GRMKRTI"/>
<dbReference type="OrthoDB" id="196547at2759"/>
<dbReference type="PAN-GO" id="P41220">
    <property type="GO annotations" value="0 GO annotations based on evolutionary models"/>
</dbReference>
<dbReference type="PhylomeDB" id="P41220"/>
<dbReference type="TreeFam" id="TF315837"/>
<dbReference type="PathwayCommons" id="P41220"/>
<dbReference type="Reactome" id="R-HSA-416476">
    <property type="pathway name" value="G alpha (q) signalling events"/>
</dbReference>
<dbReference type="SignaLink" id="P41220"/>
<dbReference type="SIGNOR" id="P41220"/>
<dbReference type="BioGRID-ORCS" id="5997">
    <property type="hits" value="13 hits in 1162 CRISPR screens"/>
</dbReference>
<dbReference type="CD-CODE" id="91857CE7">
    <property type="entry name" value="Nucleolus"/>
</dbReference>
<dbReference type="ChiTaRS" id="RGS2">
    <property type="organism name" value="human"/>
</dbReference>
<dbReference type="EvolutionaryTrace" id="P41220"/>
<dbReference type="GeneWiki" id="RGS2"/>
<dbReference type="GenomeRNAi" id="5997"/>
<dbReference type="Pharos" id="P41220">
    <property type="development level" value="Tbio"/>
</dbReference>
<dbReference type="PRO" id="PR:P41220"/>
<dbReference type="Proteomes" id="UP000005640">
    <property type="component" value="Chromosome 1"/>
</dbReference>
<dbReference type="RNAct" id="P41220">
    <property type="molecule type" value="protein"/>
</dbReference>
<dbReference type="Bgee" id="ENSG00000116741">
    <property type="expression patterns" value="Expressed in secondary oocyte and 210 other cell types or tissues"/>
</dbReference>
<dbReference type="ExpressionAtlas" id="P41220">
    <property type="expression patterns" value="baseline and differential"/>
</dbReference>
<dbReference type="GO" id="GO:0005737">
    <property type="term" value="C:cytoplasm"/>
    <property type="evidence" value="ECO:0000314"/>
    <property type="project" value="UniProtKB"/>
</dbReference>
<dbReference type="GO" id="GO:0009898">
    <property type="term" value="C:cytoplasmic side of plasma membrane"/>
    <property type="evidence" value="ECO:0000250"/>
    <property type="project" value="BHF-UCL"/>
</dbReference>
<dbReference type="GO" id="GO:0005829">
    <property type="term" value="C:cytosol"/>
    <property type="evidence" value="ECO:0000314"/>
    <property type="project" value="HPA"/>
</dbReference>
<dbReference type="GO" id="GO:0005739">
    <property type="term" value="C:mitochondrion"/>
    <property type="evidence" value="ECO:0007669"/>
    <property type="project" value="UniProtKB-SubCell"/>
</dbReference>
<dbReference type="GO" id="GO:0005730">
    <property type="term" value="C:nucleolus"/>
    <property type="evidence" value="ECO:0007669"/>
    <property type="project" value="UniProtKB-SubCell"/>
</dbReference>
<dbReference type="GO" id="GO:0005634">
    <property type="term" value="C:nucleus"/>
    <property type="evidence" value="ECO:0000314"/>
    <property type="project" value="UniProtKB"/>
</dbReference>
<dbReference type="GO" id="GO:0005886">
    <property type="term" value="C:plasma membrane"/>
    <property type="evidence" value="ECO:0000314"/>
    <property type="project" value="UniProtKB"/>
</dbReference>
<dbReference type="GO" id="GO:0010855">
    <property type="term" value="F:adenylate cyclase inhibitor activity"/>
    <property type="evidence" value="ECO:0007669"/>
    <property type="project" value="Ensembl"/>
</dbReference>
<dbReference type="GO" id="GO:0048487">
    <property type="term" value="F:beta-tubulin binding"/>
    <property type="evidence" value="ECO:0007669"/>
    <property type="project" value="Ensembl"/>
</dbReference>
<dbReference type="GO" id="GO:0005516">
    <property type="term" value="F:calmodulin binding"/>
    <property type="evidence" value="ECO:0000304"/>
    <property type="project" value="ProtInc"/>
</dbReference>
<dbReference type="GO" id="GO:0001965">
    <property type="term" value="F:G-protein alpha-subunit binding"/>
    <property type="evidence" value="ECO:0000353"/>
    <property type="project" value="UniProtKB"/>
</dbReference>
<dbReference type="GO" id="GO:0005096">
    <property type="term" value="F:GTPase activator activity"/>
    <property type="evidence" value="ECO:0000315"/>
    <property type="project" value="UniProtKB"/>
</dbReference>
<dbReference type="GO" id="GO:0003924">
    <property type="term" value="F:GTPase activity"/>
    <property type="evidence" value="ECO:0000304"/>
    <property type="project" value="Reactome"/>
</dbReference>
<dbReference type="GO" id="GO:0050873">
    <property type="term" value="P:brown fat cell differentiation"/>
    <property type="evidence" value="ECO:0007669"/>
    <property type="project" value="Ensembl"/>
</dbReference>
<dbReference type="GO" id="GO:0007186">
    <property type="term" value="P:G protein-coupled receptor signaling pathway"/>
    <property type="evidence" value="ECO:0000304"/>
    <property type="project" value="Reactome"/>
</dbReference>
<dbReference type="GO" id="GO:0060135">
    <property type="term" value="P:maternal process involved in female pregnancy"/>
    <property type="evidence" value="ECO:0007669"/>
    <property type="project" value="Ensembl"/>
</dbReference>
<dbReference type="GO" id="GO:0010614">
    <property type="term" value="P:negative regulation of cardiac muscle hypertrophy"/>
    <property type="evidence" value="ECO:0000250"/>
    <property type="project" value="BHF-UCL"/>
</dbReference>
<dbReference type="GO" id="GO:0061052">
    <property type="term" value="P:negative regulation of cell growth involved in cardiac muscle cell development"/>
    <property type="evidence" value="ECO:0007669"/>
    <property type="project" value="Ensembl"/>
</dbReference>
<dbReference type="GO" id="GO:0045744">
    <property type="term" value="P:negative regulation of G protein-coupled receptor signaling pathway"/>
    <property type="evidence" value="ECO:0000250"/>
    <property type="project" value="BHF-UCL"/>
</dbReference>
<dbReference type="GO" id="GO:1900924">
    <property type="term" value="P:negative regulation of glycine import across plasma membrane"/>
    <property type="evidence" value="ECO:0007669"/>
    <property type="project" value="Ensembl"/>
</dbReference>
<dbReference type="GO" id="GO:0046329">
    <property type="term" value="P:negative regulation of JNK cascade"/>
    <property type="evidence" value="ECO:0000250"/>
    <property type="project" value="BHF-UCL"/>
</dbReference>
<dbReference type="GO" id="GO:0017148">
    <property type="term" value="P:negative regulation of translation"/>
    <property type="evidence" value="ECO:0007669"/>
    <property type="project" value="Ensembl"/>
</dbReference>
<dbReference type="GO" id="GO:0060452">
    <property type="term" value="P:positive regulation of cardiac muscle contraction"/>
    <property type="evidence" value="ECO:0000250"/>
    <property type="project" value="BHF-UCL"/>
</dbReference>
<dbReference type="GO" id="GO:0010976">
    <property type="term" value="P:positive regulation of neuron projection development"/>
    <property type="evidence" value="ECO:0007669"/>
    <property type="project" value="Ensembl"/>
</dbReference>
<dbReference type="GO" id="GO:1900738">
    <property type="term" value="P:positive regulation of phospholipase C-activating G protein-coupled receptor signaling pathway"/>
    <property type="evidence" value="ECO:0000250"/>
    <property type="project" value="BHF-UCL"/>
</dbReference>
<dbReference type="GO" id="GO:0071877">
    <property type="term" value="P:regulation of adenylate cyclase-inhibiting adrenergic receptor signaling pathway"/>
    <property type="evidence" value="ECO:0000250"/>
    <property type="project" value="BHF-UCL"/>
</dbReference>
<dbReference type="GO" id="GO:0008277">
    <property type="term" value="P:regulation of G protein-coupled receptor signaling pathway"/>
    <property type="evidence" value="ECO:0000304"/>
    <property type="project" value="ProtInc"/>
</dbReference>
<dbReference type="GO" id="GO:0055119">
    <property type="term" value="P:relaxation of cardiac muscle"/>
    <property type="evidence" value="ECO:0000250"/>
    <property type="project" value="BHF-UCL"/>
</dbReference>
<dbReference type="GO" id="GO:0060087">
    <property type="term" value="P:relaxation of vascular associated smooth muscle"/>
    <property type="evidence" value="ECO:0007669"/>
    <property type="project" value="Ensembl"/>
</dbReference>
<dbReference type="GO" id="GO:0001975">
    <property type="term" value="P:response to amphetamine"/>
    <property type="evidence" value="ECO:0007669"/>
    <property type="project" value="Ensembl"/>
</dbReference>
<dbReference type="GO" id="GO:0045471">
    <property type="term" value="P:response to ethanol"/>
    <property type="evidence" value="ECO:0007669"/>
    <property type="project" value="Ensembl"/>
</dbReference>
<dbReference type="GO" id="GO:0007283">
    <property type="term" value="P:spermatogenesis"/>
    <property type="evidence" value="ECO:0007669"/>
    <property type="project" value="Ensembl"/>
</dbReference>
<dbReference type="CDD" id="cd08709">
    <property type="entry name" value="RGS_RGS2"/>
    <property type="match status" value="1"/>
</dbReference>
<dbReference type="FunFam" id="1.10.167.10:FF:000001">
    <property type="entry name" value="Putative regulator of g-protein signaling 12"/>
    <property type="match status" value="1"/>
</dbReference>
<dbReference type="FunFam" id="1.10.196.10:FF:000001">
    <property type="entry name" value="Regulator of G-protein signaling 8"/>
    <property type="match status" value="1"/>
</dbReference>
<dbReference type="Gene3D" id="1.10.196.10">
    <property type="match status" value="1"/>
</dbReference>
<dbReference type="Gene3D" id="1.10.167.10">
    <property type="entry name" value="Regulator of G-protein Signalling 4, domain 2"/>
    <property type="match status" value="1"/>
</dbReference>
<dbReference type="InterPro" id="IPR016137">
    <property type="entry name" value="RGS"/>
</dbReference>
<dbReference type="InterPro" id="IPR034947">
    <property type="entry name" value="RGS2_RGS"/>
</dbReference>
<dbReference type="InterPro" id="IPR036305">
    <property type="entry name" value="RGS_sf"/>
</dbReference>
<dbReference type="InterPro" id="IPR024066">
    <property type="entry name" value="RGS_subdom1/3"/>
</dbReference>
<dbReference type="InterPro" id="IPR044926">
    <property type="entry name" value="RGS_subdomain_2"/>
</dbReference>
<dbReference type="PANTHER" id="PTHR10845">
    <property type="entry name" value="REGULATOR OF G PROTEIN SIGNALING"/>
    <property type="match status" value="1"/>
</dbReference>
<dbReference type="PANTHER" id="PTHR10845:SF43">
    <property type="entry name" value="REGULATOR OF G-PROTEIN SIGNALING 2"/>
    <property type="match status" value="1"/>
</dbReference>
<dbReference type="Pfam" id="PF00615">
    <property type="entry name" value="RGS"/>
    <property type="match status" value="1"/>
</dbReference>
<dbReference type="PRINTS" id="PR01301">
    <property type="entry name" value="RGSPROTEIN"/>
</dbReference>
<dbReference type="SMART" id="SM00315">
    <property type="entry name" value="RGS"/>
    <property type="match status" value="1"/>
</dbReference>
<dbReference type="SUPFAM" id="SSF48097">
    <property type="entry name" value="Regulator of G-protein signaling, RGS"/>
    <property type="match status" value="1"/>
</dbReference>
<dbReference type="PROSITE" id="PS50132">
    <property type="entry name" value="RGS"/>
    <property type="match status" value="1"/>
</dbReference>
<comment type="function">
    <text evidence="1 4 5 8 11 13 17">Regulates G protein-coupled receptor signaling cascades. Inhibits signal transduction by increasing the GTPase activity of G protein alpha subunits, thereby driving them into their inactive GDP-bound form (PubMed:11063746, PubMed:19478087). It is involved in the negative regulation of the angiotensin-activated signaling pathway (PubMed:28784619). Plays a role in the regulation of blood pressure in response to signaling via G protein-coupled receptors and GNAQ. Plays a role in regulating the constriction and relaxation of vascular smooth muscle (By similarity). Binds EIF2B5 and blocks its activity, thereby inhibiting the translation of mRNA into protein (PubMed:19736320).</text>
</comment>
<comment type="subunit">
    <text evidence="6 9 10 11 13">Interacts with GNAQ (PubMed:18434541, PubMed:19478087, PubMed:28784619). Does not interact with GNAI1 and GNAI3 (PubMed:18434541, PubMed:19478087). Interacts with EIF2B5 (PubMed:19736320). Interacts with PRKG1 (isoform alpha) (PubMed:14608379).</text>
</comment>
<comment type="interaction">
    <interactant intactId="EBI-712388">
        <id>P41220</id>
    </interactant>
    <interactant intactId="EBI-725145">
        <id>O76071</id>
        <label>CIAO1</label>
    </interactant>
    <organismsDiffer>false</organismsDiffer>
    <experiments>3</experiments>
</comment>
<comment type="interaction">
    <interactant intactId="EBI-712388">
        <id>P41220</id>
    </interactant>
    <interactant intactId="EBI-5323863">
        <id>Q5S007</id>
        <label>LRRK2</label>
    </interactant>
    <organismsDiffer>false</organismsDiffer>
    <experiments>6</experiments>
</comment>
<comment type="interaction">
    <interactant intactId="EBI-712388">
        <id>P41220</id>
    </interactant>
    <interactant intactId="EBI-742948">
        <id>Q5JR59</id>
        <label>MTUS2</label>
    </interactant>
    <organismsDiffer>false</organismsDiffer>
    <experiments>3</experiments>
</comment>
<comment type="interaction">
    <interactant intactId="EBI-712388">
        <id>P41220</id>
    </interactant>
    <interactant intactId="EBI-11522433">
        <id>Q5JR59-3</id>
        <label>MTUS2</label>
    </interactant>
    <organismsDiffer>false</organismsDiffer>
    <experiments>3</experiments>
</comment>
<comment type="interaction">
    <interactant intactId="EBI-712388">
        <id>P41220</id>
    </interactant>
    <interactant intactId="EBI-2515561">
        <id>Q9ULJ8</id>
        <label>PPP1R9A</label>
    </interactant>
    <organismsDiffer>false</organismsDiffer>
    <experiments>3</experiments>
</comment>
<comment type="interaction">
    <interactant intactId="EBI-712388">
        <id>P41220</id>
    </interactant>
    <interactant intactId="EBI-21251460">
        <id>O60260-5</id>
        <label>PRKN</label>
    </interactant>
    <organismsDiffer>false</organismsDiffer>
    <experiments>6</experiments>
</comment>
<comment type="interaction">
    <interactant intactId="EBI-16037474">
        <id>P41220-1</id>
    </interactant>
    <interactant intactId="EBI-2684600">
        <id>O60337</id>
        <label>MARCHF6</label>
    </interactant>
    <organismsDiffer>false</organismsDiffer>
    <experiments>3</experiments>
</comment>
<comment type="interaction">
    <interactant intactId="EBI-16037474">
        <id>P41220-1</id>
    </interactant>
    <interactant intactId="EBI-771975">
        <id>P21279</id>
        <label>Gnaq</label>
    </interactant>
    <organismsDiffer>true</organismsDiffer>
    <experiments>3</experiments>
</comment>
<comment type="subcellular location">
    <molecule>Isoform 1</molecule>
    <subcellularLocation>
        <location evidence="5 8 13">Cell membrane</location>
    </subcellularLocation>
    <subcellularLocation>
        <location evidence="5 8">Cytoplasm</location>
    </subcellularLocation>
    <subcellularLocation>
        <location evidence="5 8">Nucleus</location>
        <location evidence="5 8">Nucleolus</location>
    </subcellularLocation>
</comment>
<comment type="subcellular location">
    <molecule>Isoform 2</molecule>
    <subcellularLocation>
        <location evidence="8">Cell membrane</location>
    </subcellularLocation>
    <subcellularLocation>
        <location evidence="8">Cytoplasm</location>
    </subcellularLocation>
    <subcellularLocation>
        <location evidence="8">Nucleus</location>
        <location evidence="8">Nucleolus</location>
    </subcellularLocation>
</comment>
<comment type="subcellular location">
    <molecule>Isoform 3</molecule>
    <subcellularLocation>
        <location evidence="8">Cell membrane</location>
    </subcellularLocation>
    <subcellularLocation>
        <location evidence="8">Cytoplasm</location>
    </subcellularLocation>
    <subcellularLocation>
        <location evidence="8">Nucleus</location>
        <location evidence="8">Nucleolus</location>
    </subcellularLocation>
</comment>
<comment type="subcellular location">
    <molecule>Isoform 4</molecule>
    <subcellularLocation>
        <location evidence="8">Cell membrane</location>
    </subcellularLocation>
    <subcellularLocation>
        <location evidence="8">Mitochondrion</location>
    </subcellularLocation>
</comment>
<comment type="alternative products">
    <event type="alternative initiation"/>
    <isoform>
        <id>P41220-1</id>
        <name>1</name>
        <sequence type="displayed"/>
    </isoform>
    <isoform>
        <id>P41220-2</id>
        <name>2</name>
        <sequence type="described" ref="VSP_041296"/>
    </isoform>
    <isoform>
        <id>P41220-3</id>
        <name>3</name>
        <sequence type="described" ref="VSP_041297"/>
    </isoform>
    <isoform>
        <id>P41220-4</id>
        <name>4</name>
        <sequence type="described" ref="VSP_041298"/>
    </isoform>
</comment>
<comment type="tissue specificity">
    <text evidence="14">Expressed in acute myelogenous leukemia (AML) and in acute lymphoblastic leukemia (ALL).</text>
</comment>
<comment type="PTM">
    <text evidence="4 6">Phosphorylated by protein kinase C. Phosphorylation by PRKG1 leads to activation of RGS2 activity.</text>
</comment>
<comment type="miscellaneous">
    <molecule>Isoform 3</molecule>
    <text evidence="16">Lacks type V adenylyl cyclase (AC) inhibitory function.</text>
</comment>
<comment type="miscellaneous">
    <molecule>Isoform 4</molecule>
    <text evidence="16">Lacks type V adenylyl cyclase (AC) inhibitory function.</text>
</comment>
<comment type="online information" name="Atlas of Genetics and Cytogenetics in Oncology and Haematology">
    <link uri="https://atlasgeneticsoncology.org/gene/42102/RGS2"/>
</comment>
<proteinExistence type="evidence at protein level"/>
<organism>
    <name type="scientific">Homo sapiens</name>
    <name type="common">Human</name>
    <dbReference type="NCBI Taxonomy" id="9606"/>
    <lineage>
        <taxon>Eukaryota</taxon>
        <taxon>Metazoa</taxon>
        <taxon>Chordata</taxon>
        <taxon>Craniata</taxon>
        <taxon>Vertebrata</taxon>
        <taxon>Euteleostomi</taxon>
        <taxon>Mammalia</taxon>
        <taxon>Eutheria</taxon>
        <taxon>Euarchontoglires</taxon>
        <taxon>Primates</taxon>
        <taxon>Haplorrhini</taxon>
        <taxon>Catarrhini</taxon>
        <taxon>Hominidae</taxon>
        <taxon>Homo</taxon>
    </lineage>
</organism>
<accession>P41220</accession>
<accession>Q6I9U5</accession>
<protein>
    <recommendedName>
        <fullName>Regulator of G-protein signaling 2</fullName>
        <shortName>RGS2</shortName>
    </recommendedName>
    <alternativeName>
        <fullName>Cell growth-inhibiting gene 31 protein</fullName>
    </alternativeName>
    <alternativeName>
        <fullName>G0/G1 switch regulatory protein 8</fullName>
    </alternativeName>
</protein>
<evidence type="ECO:0000250" key="1">
    <source>
        <dbReference type="UniProtKB" id="O08849"/>
    </source>
</evidence>
<evidence type="ECO:0000255" key="2">
    <source>
        <dbReference type="PROSITE-ProRule" id="PRU00171"/>
    </source>
</evidence>
<evidence type="ECO:0000256" key="3">
    <source>
        <dbReference type="SAM" id="MobiDB-lite"/>
    </source>
</evidence>
<evidence type="ECO:0000269" key="4">
    <source>
    </source>
</evidence>
<evidence type="ECO:0000269" key="5">
    <source>
    </source>
</evidence>
<evidence type="ECO:0000269" key="6">
    <source>
    </source>
</evidence>
<evidence type="ECO:0000269" key="7">
    <source>
    </source>
</evidence>
<evidence type="ECO:0000269" key="8">
    <source>
    </source>
</evidence>
<evidence type="ECO:0000269" key="9">
    <source>
    </source>
</evidence>
<evidence type="ECO:0000269" key="10">
    <source>
    </source>
</evidence>
<evidence type="ECO:0000269" key="11">
    <source>
    </source>
</evidence>
<evidence type="ECO:0000269" key="12">
    <source>
    </source>
</evidence>
<evidence type="ECO:0000269" key="13">
    <source>
    </source>
</evidence>
<evidence type="ECO:0000269" key="14">
    <source>
    </source>
</evidence>
<evidence type="ECO:0000303" key="15">
    <source>
    </source>
</evidence>
<evidence type="ECO:0000305" key="16"/>
<evidence type="ECO:0000305" key="17">
    <source>
    </source>
</evidence>
<evidence type="ECO:0007829" key="18">
    <source>
        <dbReference type="PDB" id="2AF0"/>
    </source>
</evidence>
<evidence type="ECO:0007829" key="19">
    <source>
        <dbReference type="PDB" id="2V4Z"/>
    </source>
</evidence>
<reference key="1">
    <citation type="journal article" date="1994" name="DNA Cell Biol.">
        <title>A human gene encoding a putative basic helix-loop-helix phosphoprotein whose mRNA increases rapidly in cycloheximide-treated blood mononuclear cells.</title>
        <authorList>
            <person name="Siderovski D.P."/>
            <person name="Heximer S.P."/>
            <person name="Forsdyke D.R."/>
        </authorList>
    </citation>
    <scope>NUCLEOTIDE SEQUENCE [GENOMIC DNA / MRNA] (ISOFORM 1)</scope>
    <source>
        <tissue>Placenta</tissue>
    </source>
</reference>
<reference key="2">
    <citation type="journal article" date="2001" name="J. Biol. Chem.">
        <title>Mechanisms governing subcellular localization and function of human RGS2.</title>
        <authorList>
            <person name="Heximer S.P."/>
            <person name="Lim H."/>
            <person name="Bernard J.L."/>
            <person name="Blumer K.J."/>
        </authorList>
    </citation>
    <scope>NUCLEOTIDE SEQUENCE [MRNA] (ISOFORM 1)</scope>
    <scope>FUNCTION</scope>
    <scope>SUBCELLULAR LOCATION</scope>
    <scope>MUTAGENESIS OF LEU-37; LEU-38; TRP-41; LEU-45; PHE-48 AND LEU-49</scope>
</reference>
<reference key="3">
    <citation type="journal article" date="2008" name="Mol. Pharmacol.">
        <title>Alternative translation initiation of human regulators of G-protein signaling-2 yields a set of functionally distinct proteins.</title>
        <authorList>
            <person name="Gu S."/>
            <person name="Anton A."/>
            <person name="Salim S."/>
            <person name="Blumer K.J."/>
            <person name="Dessauer C.W."/>
            <person name="Heximer S.P."/>
        </authorList>
    </citation>
    <scope>NUCLEOTIDE SEQUENCE [MRNA] (ISOFORMS 1; 2; 3 AND 4)</scope>
    <scope>FUNCTION</scope>
    <scope>SUBCELLULAR LOCATION</scope>
    <scope>ALTERNATIVE INITIATION</scope>
    <scope>MUTAGENESIS OF MET-1; MET-5; MET-16 AND MET-33</scope>
</reference>
<reference key="4">
    <citation type="submission" date="2002-03" db="EMBL/GenBank/DDBJ databases">
        <title>cDNA clones of human proteins involved in signal transduction sequenced by the Guthrie cDNA resource center (www.cdna.org).</title>
        <authorList>
            <person name="Puhl H.L. III"/>
            <person name="Ikeda S.R."/>
            <person name="Aronstam R.S."/>
        </authorList>
    </citation>
    <scope>NUCLEOTIDE SEQUENCE [LARGE SCALE MRNA] (ISOFORM 1)</scope>
</reference>
<reference key="5">
    <citation type="submission" date="2005-03" db="EMBL/GenBank/DDBJ databases">
        <title>Identification of a human cell growth-inhibiting gene.</title>
        <authorList>
            <person name="Kim J.W."/>
            <person name="Kim H.K."/>
            <person name="Shin S.M."/>
        </authorList>
    </citation>
    <scope>NUCLEOTIDE SEQUENCE [LARGE SCALE MRNA] (ISOFORM 1)</scope>
</reference>
<reference key="6">
    <citation type="journal article" date="2004" name="Nat. Genet.">
        <title>Complete sequencing and characterization of 21,243 full-length human cDNAs.</title>
        <authorList>
            <person name="Ota T."/>
            <person name="Suzuki Y."/>
            <person name="Nishikawa T."/>
            <person name="Otsuki T."/>
            <person name="Sugiyama T."/>
            <person name="Irie R."/>
            <person name="Wakamatsu A."/>
            <person name="Hayashi K."/>
            <person name="Sato H."/>
            <person name="Nagai K."/>
            <person name="Kimura K."/>
            <person name="Makita H."/>
            <person name="Sekine M."/>
            <person name="Obayashi M."/>
            <person name="Nishi T."/>
            <person name="Shibahara T."/>
            <person name="Tanaka T."/>
            <person name="Ishii S."/>
            <person name="Yamamoto J."/>
            <person name="Saito K."/>
            <person name="Kawai Y."/>
            <person name="Isono Y."/>
            <person name="Nakamura Y."/>
            <person name="Nagahari K."/>
            <person name="Murakami K."/>
            <person name="Yasuda T."/>
            <person name="Iwayanagi T."/>
            <person name="Wagatsuma M."/>
            <person name="Shiratori A."/>
            <person name="Sudo H."/>
            <person name="Hosoiri T."/>
            <person name="Kaku Y."/>
            <person name="Kodaira H."/>
            <person name="Kondo H."/>
            <person name="Sugawara M."/>
            <person name="Takahashi M."/>
            <person name="Kanda K."/>
            <person name="Yokoi T."/>
            <person name="Furuya T."/>
            <person name="Kikkawa E."/>
            <person name="Omura Y."/>
            <person name="Abe K."/>
            <person name="Kamihara K."/>
            <person name="Katsuta N."/>
            <person name="Sato K."/>
            <person name="Tanikawa M."/>
            <person name="Yamazaki M."/>
            <person name="Ninomiya K."/>
            <person name="Ishibashi T."/>
            <person name="Yamashita H."/>
            <person name="Murakawa K."/>
            <person name="Fujimori K."/>
            <person name="Tanai H."/>
            <person name="Kimata M."/>
            <person name="Watanabe M."/>
            <person name="Hiraoka S."/>
            <person name="Chiba Y."/>
            <person name="Ishida S."/>
            <person name="Ono Y."/>
            <person name="Takiguchi S."/>
            <person name="Watanabe S."/>
            <person name="Yosida M."/>
            <person name="Hotuta T."/>
            <person name="Kusano J."/>
            <person name="Kanehori K."/>
            <person name="Takahashi-Fujii A."/>
            <person name="Hara H."/>
            <person name="Tanase T.-O."/>
            <person name="Nomura Y."/>
            <person name="Togiya S."/>
            <person name="Komai F."/>
            <person name="Hara R."/>
            <person name="Takeuchi K."/>
            <person name="Arita M."/>
            <person name="Imose N."/>
            <person name="Musashino K."/>
            <person name="Yuuki H."/>
            <person name="Oshima A."/>
            <person name="Sasaki N."/>
            <person name="Aotsuka S."/>
            <person name="Yoshikawa Y."/>
            <person name="Matsunawa H."/>
            <person name="Ichihara T."/>
            <person name="Shiohata N."/>
            <person name="Sano S."/>
            <person name="Moriya S."/>
            <person name="Momiyama H."/>
            <person name="Satoh N."/>
            <person name="Takami S."/>
            <person name="Terashima Y."/>
            <person name="Suzuki O."/>
            <person name="Nakagawa S."/>
            <person name="Senoh A."/>
            <person name="Mizoguchi H."/>
            <person name="Goto Y."/>
            <person name="Shimizu F."/>
            <person name="Wakebe H."/>
            <person name="Hishigaki H."/>
            <person name="Watanabe T."/>
            <person name="Sugiyama A."/>
            <person name="Takemoto M."/>
            <person name="Kawakami B."/>
            <person name="Yamazaki M."/>
            <person name="Watanabe K."/>
            <person name="Kumagai A."/>
            <person name="Itakura S."/>
            <person name="Fukuzumi Y."/>
            <person name="Fujimori Y."/>
            <person name="Komiyama M."/>
            <person name="Tashiro H."/>
            <person name="Tanigami A."/>
            <person name="Fujiwara T."/>
            <person name="Ono T."/>
            <person name="Yamada K."/>
            <person name="Fujii Y."/>
            <person name="Ozaki K."/>
            <person name="Hirao M."/>
            <person name="Ohmori Y."/>
            <person name="Kawabata A."/>
            <person name="Hikiji T."/>
            <person name="Kobatake N."/>
            <person name="Inagaki H."/>
            <person name="Ikema Y."/>
            <person name="Okamoto S."/>
            <person name="Okitani R."/>
            <person name="Kawakami T."/>
            <person name="Noguchi S."/>
            <person name="Itoh T."/>
            <person name="Shigeta K."/>
            <person name="Senba T."/>
            <person name="Matsumura K."/>
            <person name="Nakajima Y."/>
            <person name="Mizuno T."/>
            <person name="Morinaga M."/>
            <person name="Sasaki M."/>
            <person name="Togashi T."/>
            <person name="Oyama M."/>
            <person name="Hata H."/>
            <person name="Watanabe M."/>
            <person name="Komatsu T."/>
            <person name="Mizushima-Sugano J."/>
            <person name="Satoh T."/>
            <person name="Shirai Y."/>
            <person name="Takahashi Y."/>
            <person name="Nakagawa K."/>
            <person name="Okumura K."/>
            <person name="Nagase T."/>
            <person name="Nomura N."/>
            <person name="Kikuchi H."/>
            <person name="Masuho Y."/>
            <person name="Yamashita R."/>
            <person name="Nakai K."/>
            <person name="Yada T."/>
            <person name="Nakamura Y."/>
            <person name="Ohara O."/>
            <person name="Isogai T."/>
            <person name="Sugano S."/>
        </authorList>
    </citation>
    <scope>NUCLEOTIDE SEQUENCE [LARGE SCALE MRNA] (ISOFORM 1)</scope>
</reference>
<reference key="7">
    <citation type="submission" date="2003-05" db="EMBL/GenBank/DDBJ databases">
        <title>Cloning of human full-length CDSs in BD Creator(TM) system donor vector.</title>
        <authorList>
            <person name="Kalnine N."/>
            <person name="Chen X."/>
            <person name="Rolfs A."/>
            <person name="Halleck A."/>
            <person name="Hines L."/>
            <person name="Eisenstein S."/>
            <person name="Koundinya M."/>
            <person name="Raphael J."/>
            <person name="Moreira D."/>
            <person name="Kelley T."/>
            <person name="LaBaer J."/>
            <person name="Lin Y."/>
            <person name="Phelan M."/>
            <person name="Farmer A."/>
        </authorList>
    </citation>
    <scope>NUCLEOTIDE SEQUENCE [LARGE SCALE MRNA] (ISOFORM 1)</scope>
</reference>
<reference key="8">
    <citation type="submission" date="2004-06" db="EMBL/GenBank/DDBJ databases">
        <title>Cloning of human full open reading frames in Gateway(TM) system entry vector (pDONR201).</title>
        <authorList>
            <person name="Ebert L."/>
            <person name="Schick M."/>
            <person name="Neubert P."/>
            <person name="Schatten R."/>
            <person name="Henze S."/>
            <person name="Korn B."/>
        </authorList>
    </citation>
    <scope>NUCLEOTIDE SEQUENCE [LARGE SCALE MRNA] (ISOFORM 1)</scope>
</reference>
<reference key="9">
    <citation type="journal article" date="2006" name="Nature">
        <title>The DNA sequence and biological annotation of human chromosome 1.</title>
        <authorList>
            <person name="Gregory S.G."/>
            <person name="Barlow K.F."/>
            <person name="McLay K.E."/>
            <person name="Kaul R."/>
            <person name="Swarbreck D."/>
            <person name="Dunham A."/>
            <person name="Scott C.E."/>
            <person name="Howe K.L."/>
            <person name="Woodfine K."/>
            <person name="Spencer C.C.A."/>
            <person name="Jones M.C."/>
            <person name="Gillson C."/>
            <person name="Searle S."/>
            <person name="Zhou Y."/>
            <person name="Kokocinski F."/>
            <person name="McDonald L."/>
            <person name="Evans R."/>
            <person name="Phillips K."/>
            <person name="Atkinson A."/>
            <person name="Cooper R."/>
            <person name="Jones C."/>
            <person name="Hall R.E."/>
            <person name="Andrews T.D."/>
            <person name="Lloyd C."/>
            <person name="Ainscough R."/>
            <person name="Almeida J.P."/>
            <person name="Ambrose K.D."/>
            <person name="Anderson F."/>
            <person name="Andrew R.W."/>
            <person name="Ashwell R.I.S."/>
            <person name="Aubin K."/>
            <person name="Babbage A.K."/>
            <person name="Bagguley C.L."/>
            <person name="Bailey J."/>
            <person name="Beasley H."/>
            <person name="Bethel G."/>
            <person name="Bird C.P."/>
            <person name="Bray-Allen S."/>
            <person name="Brown J.Y."/>
            <person name="Brown A.J."/>
            <person name="Buckley D."/>
            <person name="Burton J."/>
            <person name="Bye J."/>
            <person name="Carder C."/>
            <person name="Chapman J.C."/>
            <person name="Clark S.Y."/>
            <person name="Clarke G."/>
            <person name="Clee C."/>
            <person name="Cobley V."/>
            <person name="Collier R.E."/>
            <person name="Corby N."/>
            <person name="Coville G.J."/>
            <person name="Davies J."/>
            <person name="Deadman R."/>
            <person name="Dunn M."/>
            <person name="Earthrowl M."/>
            <person name="Ellington A.G."/>
            <person name="Errington H."/>
            <person name="Frankish A."/>
            <person name="Frankland J."/>
            <person name="French L."/>
            <person name="Garner P."/>
            <person name="Garnett J."/>
            <person name="Gay L."/>
            <person name="Ghori M.R.J."/>
            <person name="Gibson R."/>
            <person name="Gilby L.M."/>
            <person name="Gillett W."/>
            <person name="Glithero R.J."/>
            <person name="Grafham D.V."/>
            <person name="Griffiths C."/>
            <person name="Griffiths-Jones S."/>
            <person name="Grocock R."/>
            <person name="Hammond S."/>
            <person name="Harrison E.S.I."/>
            <person name="Hart E."/>
            <person name="Haugen E."/>
            <person name="Heath P.D."/>
            <person name="Holmes S."/>
            <person name="Holt K."/>
            <person name="Howden P.J."/>
            <person name="Hunt A.R."/>
            <person name="Hunt S.E."/>
            <person name="Hunter G."/>
            <person name="Isherwood J."/>
            <person name="James R."/>
            <person name="Johnson C."/>
            <person name="Johnson D."/>
            <person name="Joy A."/>
            <person name="Kay M."/>
            <person name="Kershaw J.K."/>
            <person name="Kibukawa M."/>
            <person name="Kimberley A.M."/>
            <person name="King A."/>
            <person name="Knights A.J."/>
            <person name="Lad H."/>
            <person name="Laird G."/>
            <person name="Lawlor S."/>
            <person name="Leongamornlert D.A."/>
            <person name="Lloyd D.M."/>
            <person name="Loveland J."/>
            <person name="Lovell J."/>
            <person name="Lush M.J."/>
            <person name="Lyne R."/>
            <person name="Martin S."/>
            <person name="Mashreghi-Mohammadi M."/>
            <person name="Matthews L."/>
            <person name="Matthews N.S.W."/>
            <person name="McLaren S."/>
            <person name="Milne S."/>
            <person name="Mistry S."/>
            <person name="Moore M.J.F."/>
            <person name="Nickerson T."/>
            <person name="O'Dell C.N."/>
            <person name="Oliver K."/>
            <person name="Palmeiri A."/>
            <person name="Palmer S.A."/>
            <person name="Parker A."/>
            <person name="Patel D."/>
            <person name="Pearce A.V."/>
            <person name="Peck A.I."/>
            <person name="Pelan S."/>
            <person name="Phelps K."/>
            <person name="Phillimore B.J."/>
            <person name="Plumb R."/>
            <person name="Rajan J."/>
            <person name="Raymond C."/>
            <person name="Rouse G."/>
            <person name="Saenphimmachak C."/>
            <person name="Sehra H.K."/>
            <person name="Sheridan E."/>
            <person name="Shownkeen R."/>
            <person name="Sims S."/>
            <person name="Skuce C.D."/>
            <person name="Smith M."/>
            <person name="Steward C."/>
            <person name="Subramanian S."/>
            <person name="Sycamore N."/>
            <person name="Tracey A."/>
            <person name="Tromans A."/>
            <person name="Van Helmond Z."/>
            <person name="Wall M."/>
            <person name="Wallis J.M."/>
            <person name="White S."/>
            <person name="Whitehead S.L."/>
            <person name="Wilkinson J.E."/>
            <person name="Willey D.L."/>
            <person name="Williams H."/>
            <person name="Wilming L."/>
            <person name="Wray P.W."/>
            <person name="Wu Z."/>
            <person name="Coulson A."/>
            <person name="Vaudin M."/>
            <person name="Sulston J.E."/>
            <person name="Durbin R.M."/>
            <person name="Hubbard T."/>
            <person name="Wooster R."/>
            <person name="Dunham I."/>
            <person name="Carter N.P."/>
            <person name="McVean G."/>
            <person name="Ross M.T."/>
            <person name="Harrow J."/>
            <person name="Olson M.V."/>
            <person name="Beck S."/>
            <person name="Rogers J."/>
            <person name="Bentley D.R."/>
        </authorList>
    </citation>
    <scope>NUCLEOTIDE SEQUENCE [LARGE SCALE GENOMIC DNA]</scope>
</reference>
<reference key="10">
    <citation type="submission" date="2005-07" db="EMBL/GenBank/DDBJ databases">
        <authorList>
            <person name="Mural R.J."/>
            <person name="Istrail S."/>
            <person name="Sutton G.G."/>
            <person name="Florea L."/>
            <person name="Halpern A.L."/>
            <person name="Mobarry C.M."/>
            <person name="Lippert R."/>
            <person name="Walenz B."/>
            <person name="Shatkay H."/>
            <person name="Dew I."/>
            <person name="Miller J.R."/>
            <person name="Flanigan M.J."/>
            <person name="Edwards N.J."/>
            <person name="Bolanos R."/>
            <person name="Fasulo D."/>
            <person name="Halldorsson B.V."/>
            <person name="Hannenhalli S."/>
            <person name="Turner R."/>
            <person name="Yooseph S."/>
            <person name="Lu F."/>
            <person name="Nusskern D.R."/>
            <person name="Shue B.C."/>
            <person name="Zheng X.H."/>
            <person name="Zhong F."/>
            <person name="Delcher A.L."/>
            <person name="Huson D.H."/>
            <person name="Kravitz S.A."/>
            <person name="Mouchard L."/>
            <person name="Reinert K."/>
            <person name="Remington K.A."/>
            <person name="Clark A.G."/>
            <person name="Waterman M.S."/>
            <person name="Eichler E.E."/>
            <person name="Adams M.D."/>
            <person name="Hunkapiller M.W."/>
            <person name="Myers E.W."/>
            <person name="Venter J.C."/>
        </authorList>
    </citation>
    <scope>NUCLEOTIDE SEQUENCE [LARGE SCALE GENOMIC DNA]</scope>
</reference>
<reference key="11">
    <citation type="journal article" date="2004" name="Genome Res.">
        <title>The status, quality, and expansion of the NIH full-length cDNA project: the Mammalian Gene Collection (MGC).</title>
        <authorList>
            <consortium name="The MGC Project Team"/>
        </authorList>
    </citation>
    <scope>NUCLEOTIDE SEQUENCE [LARGE SCALE MRNA] (ISOFORM 1)</scope>
    <source>
        <tissue>Urinary bladder</tissue>
    </source>
</reference>
<reference key="12">
    <citation type="journal article" date="1995" name="Leukemia">
        <title>Differential expression of a basic helix-loop-helix phosphoprotein gene, G0S8, in acute leukemia and localization to human chromosome 1q31.</title>
        <authorList>
            <person name="Wu H.-K."/>
            <person name="Heng H.H.Q."/>
            <person name="Shi X.-M."/>
            <person name="Forsdyke D.R."/>
            <person name="Tsui L.-C."/>
            <person name="Mak T.W."/>
            <person name="Minden M.D."/>
            <person name="Siderovski D.P."/>
        </authorList>
    </citation>
    <scope>TISSUE SPECIFICITY</scope>
</reference>
<reference key="13">
    <citation type="journal article" date="2001" name="J. Biol. Chem.">
        <title>Protein kinase C phosphorylates RGS2 and modulates its capacity for negative regulation of Galpha 11 signaling.</title>
        <authorList>
            <person name="Cunningham M.L."/>
            <person name="Waldo G.L."/>
            <person name="Hollinger S."/>
            <person name="Hepler J.R."/>
            <person name="Harden T.K."/>
        </authorList>
    </citation>
    <scope>PHOSPHORYLATION</scope>
    <scope>FUNCTION</scope>
</reference>
<reference key="14">
    <citation type="journal article" date="2003" name="Nat. Med.">
        <title>Regulator of G-protein signaling-2 mediates vascular smooth muscle relaxation and blood pressure.</title>
        <authorList>
            <person name="Tang K.M."/>
            <person name="Wang G.R."/>
            <person name="Lu P."/>
            <person name="Karas R.H."/>
            <person name="Aronovitz M."/>
            <person name="Heximer S.P."/>
            <person name="Kaltenbronn K.M."/>
            <person name="Blumer K.J."/>
            <person name="Siderovski D.P."/>
            <person name="Zhu Y."/>
            <person name="Mendelsohn M.E."/>
        </authorList>
    </citation>
    <scope>PHOSPHORYLATION BY PRKG1</scope>
    <scope>INTERACTION WITH PRKG1</scope>
</reference>
<reference key="15">
    <citation type="journal article" date="2009" name="J. Cell Biol.">
        <title>Translational control by RGS2.</title>
        <authorList>
            <person name="Nguyen C.H."/>
            <person name="Ming H."/>
            <person name="Zhao P."/>
            <person name="Hugendubler L."/>
            <person name="Gros R."/>
            <person name="Kimball S.R."/>
            <person name="Chidiac P."/>
        </authorList>
    </citation>
    <scope>FUNCTION</scope>
    <scope>INTERACTION WITH EIF2B5</scope>
    <scope>MUTAGENESIS OF LEU-79; GLU-86; LEU-87; SER-90; LYS-102; PHE-105; ILE-110; GLU-111; LEU-114 AND ASN-149</scope>
</reference>
<reference key="16">
    <citation type="journal article" date="2017" name="Mol. Pharmacol.">
        <title>Human missense mutations in regulator of G protein signaling 2 affect the protein function through multiple mechanisms.</title>
        <authorList>
            <person name="Phan H.T.N."/>
            <person name="Sjoegren B."/>
            <person name="Neubig R.R."/>
        </authorList>
    </citation>
    <scope>FUNCTION</scope>
    <scope>SUBCELLULAR LOCATION</scope>
    <scope>INTERACTION WITH GNAQ</scope>
    <scope>CHARACTERIZATION OF VARIANTS ARG-2; LEU-2; GLY-3; VAL-4; VAL-5; ASN-18; ASP-23; TYR-40; HIS-44; LYS-50; LEU-55; HIS-78; GLY-99; VAL-110; HIS-188 AND ARG-196</scope>
</reference>
<reference key="17">
    <citation type="journal article" date="2008" name="Proc. Natl. Acad. Sci. U.S.A.">
        <title>Structural diversity in the RGS domain and its interaction with heterotrimeric G protein alpha-subunits.</title>
        <authorList>
            <person name="Soundararajan M."/>
            <person name="Willard F.S."/>
            <person name="Kimple A.J."/>
            <person name="Turnbull A.P."/>
            <person name="Ball L.J."/>
            <person name="Schoch G.A."/>
            <person name="Gileadi C."/>
            <person name="Fedorov O.Y."/>
            <person name="Dowler E.F."/>
            <person name="Higman V.A."/>
            <person name="Hutsell S.Q."/>
            <person name="Sundstroem M."/>
            <person name="Doyle D.A."/>
            <person name="Siderovski D.P."/>
        </authorList>
    </citation>
    <scope>X-RAY CRYSTALLOGRAPHY (2.3 ANGSTROMS) OF 71-203</scope>
    <scope>INTERACTION WITH GNAQ</scope>
    <scope>LACK OF INTERACTION WITH GNAI1</scope>
    <scope>MUTAGENESIS OF CYS-106 AND ASN-184</scope>
</reference>
<reference key="18">
    <citation type="journal article" date="2009" name="J. Biol. Chem.">
        <title>Structural determinants of G-protein alpha subunit selectivity by regulator of G-protein signaling 2 (RGS2).</title>
        <authorList>
            <person name="Kimple A.J."/>
            <person name="Soundararajan M."/>
            <person name="Hutsell S.Q."/>
            <person name="Roos A.K."/>
            <person name="Urban D.J."/>
            <person name="Setola V."/>
            <person name="Temple B.R."/>
            <person name="Roth B.L."/>
            <person name="Knapp S."/>
            <person name="Willard F.S."/>
            <person name="Siderovski D.P."/>
        </authorList>
    </citation>
    <scope>X-RAY CRYSTALLOGRAPHY (2.80 ANGSTROMS) OF 71-209 IN COMPLEXES WITH GNAQ AND GNAI3</scope>
    <scope>FUNCTION</scope>
    <scope>INTERACTION WITH GNAQ</scope>
    <scope>LACK OF INTERACTION WITH GNAI1 AND GNAI3</scope>
    <scope>MUTAGENESIS OF CYS-106; ASN-184 AND GLU-191</scope>
</reference>
<reference key="19">
    <citation type="journal article" date="2005" name="J. Hypertens.">
        <title>Genetic variations of regulator of G-protein signaling 2 in hypertensive patients and in the general population.</title>
        <authorList>
            <person name="Yang J."/>
            <person name="Kamide K."/>
            <person name="Kokubo Y."/>
            <person name="Takiuchi S."/>
            <person name="Tanaka C."/>
            <person name="Banno M."/>
            <person name="Miwa Y."/>
            <person name="Yoshii M."/>
            <person name="Horio T."/>
            <person name="Okayama A."/>
            <person name="Tomoike H."/>
            <person name="Kawano Y."/>
            <person name="Miyata T."/>
        </authorList>
    </citation>
    <scope>VARIANTS ARG-2; LEU-2; VAL-5; HIS-44 AND HIS-78</scope>
</reference>
<reference key="20">
    <citation type="journal article" date="2016" name="Nature">
        <title>Analysis of protein-coding genetic variation in 60,706 humans.</title>
        <authorList>
            <consortium name="Exome Aggregation Consortium"/>
            <person name="Lek M."/>
            <person name="Karczewski K.J."/>
            <person name="Minikel E.V."/>
            <person name="Samocha K.E."/>
            <person name="Banks E."/>
            <person name="Fennell T."/>
            <person name="O'Donnell-Luria A.H."/>
            <person name="Ware J.S."/>
            <person name="Hill A.J."/>
            <person name="Cummings B.B."/>
            <person name="Tukiainen T."/>
            <person name="Birnbaum D.P."/>
            <person name="Kosmicki J.A."/>
            <person name="Duncan L.E."/>
            <person name="Estrada K."/>
            <person name="Zhao F."/>
            <person name="Zou J."/>
            <person name="Pierce-Hoffman E."/>
            <person name="Berghout J."/>
            <person name="Cooper D.N."/>
            <person name="Deflaux N."/>
            <person name="DePristo M."/>
            <person name="Do R."/>
            <person name="Flannick J."/>
            <person name="Fromer M."/>
            <person name="Gauthier L."/>
            <person name="Goldstein J."/>
            <person name="Gupta N."/>
            <person name="Howrigan D."/>
            <person name="Kiezun A."/>
            <person name="Kurki M.I."/>
            <person name="Moonshine A.L."/>
            <person name="Natarajan P."/>
            <person name="Orozco L."/>
            <person name="Peloso G.M."/>
            <person name="Poplin R."/>
            <person name="Rivas M.A."/>
            <person name="Ruano-Rubio V."/>
            <person name="Rose S.A."/>
            <person name="Ruderfer D.M."/>
            <person name="Shakir K."/>
            <person name="Stenson P.D."/>
            <person name="Stevens C."/>
            <person name="Thomas B.P."/>
            <person name="Tiao G."/>
            <person name="Tusie-Luna M.T."/>
            <person name="Weisburd B."/>
            <person name="Won H.H."/>
            <person name="Yu D."/>
            <person name="Altshuler D.M."/>
            <person name="Ardissino D."/>
            <person name="Boehnke M."/>
            <person name="Danesh J."/>
            <person name="Donnelly S."/>
            <person name="Elosua R."/>
            <person name="Florez J.C."/>
            <person name="Gabriel S.B."/>
            <person name="Getz G."/>
            <person name="Glatt S.J."/>
            <person name="Hultman C.M."/>
            <person name="Kathiresan S."/>
            <person name="Laakso M."/>
            <person name="McCarroll S."/>
            <person name="McCarthy M.I."/>
            <person name="McGovern D."/>
            <person name="McPherson R."/>
            <person name="Neale B.M."/>
            <person name="Palotie A."/>
            <person name="Purcell S.M."/>
            <person name="Saleheen D."/>
            <person name="Scharf J.M."/>
            <person name="Sklar P."/>
            <person name="Sullivan P.F."/>
            <person name="Tuomilehto J."/>
            <person name="Tsuang M.T."/>
            <person name="Watkins H.C."/>
            <person name="Wilson J.G."/>
            <person name="Daly M.J."/>
            <person name="MacArthur D.G."/>
        </authorList>
    </citation>
    <scope>VARIANTS ARG-2; LEU-2; GLY-3; VAL-4; VAL-5; ASN-18; ASP-23; TYR-40; HIS-44; LYS-50; LEU-55; GLY-99; VAL-110; HIS-188 AND ARG-196</scope>
</reference>
<sequence length="211" mass="24382">MQSAMFLAVQHDCRPMDKSAGSGHKSEEKREKMKRTLLKDWKTRLSYFLQNSSTPGKPKTGKKSKQQAFIKPSPEEAQLWSEAFDELLASKYGLAAFRAFLKSEFCEENIEFWLACEDFKKTKSPQKLSSKARKIYTDFIEKEAPKEINIDFQTKTLIAQNIQEATSGCFTTAQKRVYSLMENNSYPRFLESEFYQDLCKKPQITTEPHAT</sequence>